<keyword id="KW-0256">Endoplasmic reticulum</keyword>
<keyword id="KW-0472">Membrane</keyword>
<keyword id="KW-1185">Reference proteome</keyword>
<keyword id="KW-0812">Transmembrane</keyword>
<keyword id="KW-1133">Transmembrane helix</keyword>
<keyword id="KW-0833">Ubl conjugation pathway</keyword>
<comment type="function">
    <text evidence="1 2">Substrate adapter for ufmylation, the covalent attachment of the ubiquitin-like modifier UFM1 to substrate proteins (By similarity). Required for ufmylation of Atg9; protects the nervous system during aging, possibly by stabilizing Atg9 and supporting its function (By similarity).</text>
</comment>
<comment type="subunit">
    <text evidence="2">Interacts with Atg9; the interaction is transient.</text>
</comment>
<comment type="subcellular location">
    <subcellularLocation>
        <location evidence="1">Endoplasmic reticulum membrane</location>
        <topology evidence="3">Single-pass membrane protein</topology>
    </subcellularLocation>
</comment>
<comment type="similarity">
    <text evidence="5">Belongs to the DDRGK1 family.</text>
</comment>
<proteinExistence type="inferred from homology"/>
<protein>
    <recommendedName>
        <fullName>DDRGK domain-containing protein 1</fullName>
    </recommendedName>
</protein>
<organism>
    <name type="scientific">Drosophila pseudoobscura pseudoobscura</name>
    <name type="common">Fruit fly</name>
    <dbReference type="NCBI Taxonomy" id="46245"/>
    <lineage>
        <taxon>Eukaryota</taxon>
        <taxon>Metazoa</taxon>
        <taxon>Ecdysozoa</taxon>
        <taxon>Arthropoda</taxon>
        <taxon>Hexapoda</taxon>
        <taxon>Insecta</taxon>
        <taxon>Pterygota</taxon>
        <taxon>Neoptera</taxon>
        <taxon>Endopterygota</taxon>
        <taxon>Diptera</taxon>
        <taxon>Brachycera</taxon>
        <taxon>Muscomorpha</taxon>
        <taxon>Ephydroidea</taxon>
        <taxon>Drosophilidae</taxon>
        <taxon>Drosophila</taxon>
        <taxon>Sophophora</taxon>
    </lineage>
</organism>
<feature type="chain" id="PRO_0000391863" description="DDRGK domain-containing protein 1">
    <location>
        <begin position="1"/>
        <end position="309"/>
    </location>
</feature>
<feature type="topological domain" description="Lumenal" evidence="5">
    <location>
        <begin position="1"/>
        <end position="2"/>
    </location>
</feature>
<feature type="transmembrane region" description="Helical" evidence="3">
    <location>
        <begin position="3"/>
        <end position="23"/>
    </location>
</feature>
<feature type="topological domain" description="Cytoplasmic" evidence="5">
    <location>
        <begin position="24"/>
        <end position="309"/>
    </location>
</feature>
<feature type="region of interest" description="Disordered" evidence="4">
    <location>
        <begin position="30"/>
        <end position="178"/>
    </location>
</feature>
<feature type="compositionally biased region" description="Low complexity" evidence="4">
    <location>
        <begin position="53"/>
        <end position="84"/>
    </location>
</feature>
<feature type="compositionally biased region" description="Acidic residues" evidence="4">
    <location>
        <begin position="85"/>
        <end position="95"/>
    </location>
</feature>
<feature type="compositionally biased region" description="Basic and acidic residues" evidence="4">
    <location>
        <begin position="107"/>
        <end position="178"/>
    </location>
</feature>
<sequence>MDLIILVGIASALLVVILTIFFLQKKKGGTEAKEAAAPPQRGVPLRAQEGVPRRAQIARNQRNRLRQNAPAAAPAAAAALQAADAEGDNDDENPDGDGQRMPQGAVLDEKMGAKKRAKMEAKEQKRLHREQELIDREQRKVKEAKEEAERKQQEDFQEEADRKRAEAERLVKEERERKEHEEYLKMKAGFSVEEEGFEEGDADDQDNLLADFIQYIKDNKVVLLEDLAVAFKLKTQQAIERIQDLQANGTLTGVIDDRGKFIYVSEEELAAVAKFIKQRGRVSIVELAESSNNLINLTPVSAGAGEGSS</sequence>
<gene>
    <name evidence="2" type="primary">Ddrgk1</name>
    <name type="ORF">GA19186</name>
</gene>
<name>DDRGK_DROPS</name>
<dbReference type="EMBL" id="CM000070">
    <property type="protein sequence ID" value="EAL28801.1"/>
    <property type="molecule type" value="Genomic_DNA"/>
</dbReference>
<dbReference type="RefSeq" id="XP_001359651.1">
    <property type="nucleotide sequence ID" value="XM_001359614.4"/>
</dbReference>
<dbReference type="SMR" id="Q295B1"/>
<dbReference type="FunCoup" id="Q295B1">
    <property type="interactions" value="592"/>
</dbReference>
<dbReference type="STRING" id="46245.Q295B1"/>
<dbReference type="EnsemblMetazoa" id="FBtr0286223">
    <property type="protein sequence ID" value="FBpp0284661"/>
    <property type="gene ID" value="FBgn0079183"/>
</dbReference>
<dbReference type="GeneID" id="4802807"/>
<dbReference type="KEGG" id="dpo:4802807"/>
<dbReference type="CTD" id="65992"/>
<dbReference type="eggNOG" id="KOG3054">
    <property type="taxonomic scope" value="Eukaryota"/>
</dbReference>
<dbReference type="HOGENOM" id="CLU_059562_1_0_1"/>
<dbReference type="InParanoid" id="Q295B1"/>
<dbReference type="OMA" id="EFTRECN"/>
<dbReference type="PhylomeDB" id="Q295B1"/>
<dbReference type="Proteomes" id="UP000001819">
    <property type="component" value="Chromosome 2"/>
</dbReference>
<dbReference type="Bgee" id="FBgn0079183">
    <property type="expression patterns" value="Expressed in male reproductive system and 3 other cell types or tissues"/>
</dbReference>
<dbReference type="GO" id="GO:0005789">
    <property type="term" value="C:endoplasmic reticulum membrane"/>
    <property type="evidence" value="ECO:0007669"/>
    <property type="project" value="UniProtKB-SubCell"/>
</dbReference>
<dbReference type="GO" id="GO:0044389">
    <property type="term" value="F:ubiquitin-like protein ligase binding"/>
    <property type="evidence" value="ECO:0007669"/>
    <property type="project" value="TreeGrafter"/>
</dbReference>
<dbReference type="FunFam" id="1.10.10.10:FF:000143">
    <property type="entry name" value="DDRGK domain-containing protein 1"/>
    <property type="match status" value="1"/>
</dbReference>
<dbReference type="Gene3D" id="1.10.10.10">
    <property type="entry name" value="Winged helix-like DNA-binding domain superfamily/Winged helix DNA-binding domain"/>
    <property type="match status" value="1"/>
</dbReference>
<dbReference type="InterPro" id="IPR019153">
    <property type="entry name" value="DDRGK_dom-contain"/>
</dbReference>
<dbReference type="InterPro" id="IPR050899">
    <property type="entry name" value="DDRGK_domain-containing"/>
</dbReference>
<dbReference type="InterPro" id="IPR036388">
    <property type="entry name" value="WH-like_DNA-bd_sf"/>
</dbReference>
<dbReference type="InterPro" id="IPR036390">
    <property type="entry name" value="WH_DNA-bd_sf"/>
</dbReference>
<dbReference type="PANTHER" id="PTHR48176">
    <property type="entry name" value="DDRGK DOMAIN-CONTAINING PROTEIN 1"/>
    <property type="match status" value="1"/>
</dbReference>
<dbReference type="PANTHER" id="PTHR48176:SF1">
    <property type="entry name" value="DDRGK DOMAIN-CONTAINING PROTEIN 1"/>
    <property type="match status" value="1"/>
</dbReference>
<dbReference type="Pfam" id="PF09756">
    <property type="entry name" value="DDRGK"/>
    <property type="match status" value="1"/>
</dbReference>
<dbReference type="SMART" id="SM01128">
    <property type="entry name" value="DDRGK"/>
    <property type="match status" value="1"/>
</dbReference>
<dbReference type="SUPFAM" id="SSF46785">
    <property type="entry name" value="Winged helix' DNA-binding domain"/>
    <property type="match status" value="1"/>
</dbReference>
<evidence type="ECO:0000250" key="1">
    <source>
        <dbReference type="UniProtKB" id="Q96HY6"/>
    </source>
</evidence>
<evidence type="ECO:0000250" key="2">
    <source>
        <dbReference type="UniProtKB" id="Q9VDD1"/>
    </source>
</evidence>
<evidence type="ECO:0000255" key="3"/>
<evidence type="ECO:0000256" key="4">
    <source>
        <dbReference type="SAM" id="MobiDB-lite"/>
    </source>
</evidence>
<evidence type="ECO:0000305" key="5"/>
<accession>Q295B1</accession>
<reference key="1">
    <citation type="journal article" date="2005" name="Genome Res.">
        <title>Comparative genome sequencing of Drosophila pseudoobscura: chromosomal, gene, and cis-element evolution.</title>
        <authorList>
            <person name="Richards S."/>
            <person name="Liu Y."/>
            <person name="Bettencourt B.R."/>
            <person name="Hradecky P."/>
            <person name="Letovsky S."/>
            <person name="Nielsen R."/>
            <person name="Thornton K."/>
            <person name="Hubisz M.J."/>
            <person name="Chen R."/>
            <person name="Meisel R.P."/>
            <person name="Couronne O."/>
            <person name="Hua S."/>
            <person name="Smith M.A."/>
            <person name="Zhang P."/>
            <person name="Liu J."/>
            <person name="Bussemaker H.J."/>
            <person name="van Batenburg M.F."/>
            <person name="Howells S.L."/>
            <person name="Scherer S.E."/>
            <person name="Sodergren E."/>
            <person name="Matthews B.B."/>
            <person name="Crosby M.A."/>
            <person name="Schroeder A.J."/>
            <person name="Ortiz-Barrientos D."/>
            <person name="Rives C.M."/>
            <person name="Metzker M.L."/>
            <person name="Muzny D.M."/>
            <person name="Scott G."/>
            <person name="Steffen D."/>
            <person name="Wheeler D.A."/>
            <person name="Worley K.C."/>
            <person name="Havlak P."/>
            <person name="Durbin K.J."/>
            <person name="Egan A."/>
            <person name="Gill R."/>
            <person name="Hume J."/>
            <person name="Morgan M.B."/>
            <person name="Miner G."/>
            <person name="Hamilton C."/>
            <person name="Huang Y."/>
            <person name="Waldron L."/>
            <person name="Verduzco D."/>
            <person name="Clerc-Blankenburg K.P."/>
            <person name="Dubchak I."/>
            <person name="Noor M.A.F."/>
            <person name="Anderson W."/>
            <person name="White K.P."/>
            <person name="Clark A.G."/>
            <person name="Schaeffer S.W."/>
            <person name="Gelbart W.M."/>
            <person name="Weinstock G.M."/>
            <person name="Gibbs R.A."/>
        </authorList>
    </citation>
    <scope>NUCLEOTIDE SEQUENCE [LARGE SCALE GENOMIC DNA]</scope>
    <source>
        <strain>MV2-25 / Tucson 14011-0121.94</strain>
    </source>
</reference>